<dbReference type="GO" id="GO:0005576">
    <property type="term" value="C:extracellular region"/>
    <property type="evidence" value="ECO:0007669"/>
    <property type="project" value="UniProtKB-SubCell"/>
</dbReference>
<dbReference type="GO" id="GO:0005179">
    <property type="term" value="F:hormone activity"/>
    <property type="evidence" value="ECO:0007669"/>
    <property type="project" value="UniProtKB-KW"/>
</dbReference>
<dbReference type="GO" id="GO:0007218">
    <property type="term" value="P:neuropeptide signaling pathway"/>
    <property type="evidence" value="ECO:0007669"/>
    <property type="project" value="UniProtKB-KW"/>
</dbReference>
<dbReference type="InterPro" id="IPR002047">
    <property type="entry name" value="Adipokinetic_hormone_CS"/>
</dbReference>
<dbReference type="PROSITE" id="PS00256">
    <property type="entry name" value="AKH"/>
    <property type="match status" value="1"/>
</dbReference>
<evidence type="ECO:0000250" key="1">
    <source>
        <dbReference type="UniProtKB" id="P67790"/>
    </source>
</evidence>
<evidence type="ECO:0000255" key="2"/>
<evidence type="ECO:0000269" key="3">
    <source>
    </source>
</evidence>
<evidence type="ECO:0000303" key="4">
    <source>
    </source>
</evidence>
<evidence type="ECO:0000305" key="5"/>
<reference evidence="5" key="1">
    <citation type="journal article" date="2009" name="BMC Evol. Biol.">
        <title>A proteomic approach for studying insect phylogeny: CAPA peptides of ancient insect taxa (Dictyoptera, Blattoptera) as a test case.</title>
        <authorList>
            <person name="Roth S."/>
            <person name="Fromm B."/>
            <person name="Gaede G."/>
            <person name="Predel R."/>
        </authorList>
    </citation>
    <scope>PROTEIN SEQUENCE</scope>
    <scope>PYROGLUTAMATE FORMATION AT GLN-1</scope>
    <scope>AMIDATION AT THR-10</scope>
    <source>
        <tissue evidence="3">Corpora cardiaca</tissue>
    </source>
</reference>
<organism>
    <name type="scientific">Gyna lurida</name>
    <name type="common">Porcelain cockroach</name>
    <dbReference type="NCBI Taxonomy" id="406578"/>
    <lineage>
        <taxon>Eukaryota</taxon>
        <taxon>Metazoa</taxon>
        <taxon>Ecdysozoa</taxon>
        <taxon>Arthropoda</taxon>
        <taxon>Hexapoda</taxon>
        <taxon>Insecta</taxon>
        <taxon>Pterygota</taxon>
        <taxon>Neoptera</taxon>
        <taxon>Polyneoptera</taxon>
        <taxon>Dictyoptera</taxon>
        <taxon>Blattodea</taxon>
        <taxon>Blaberoidea</taxon>
        <taxon>Blaberidae</taxon>
        <taxon>Gyninae</taxon>
        <taxon>Gyna</taxon>
    </lineage>
</organism>
<keyword id="KW-0027">Amidation</keyword>
<keyword id="KW-0903">Direct protein sequencing</keyword>
<keyword id="KW-0372">Hormone</keyword>
<keyword id="KW-0527">Neuropeptide</keyword>
<keyword id="KW-0873">Pyrrolidone carboxylic acid</keyword>
<keyword id="KW-0964">Secreted</keyword>
<protein>
    <recommendedName>
        <fullName evidence="1">Hypertrehalosaemic factor</fullName>
    </recommendedName>
    <alternativeName>
        <fullName evidence="4">Adipokinetic hormone 1</fullName>
        <shortName evidence="4">GynLu-AKH-1</shortName>
    </alternativeName>
    <alternativeName>
        <fullName evidence="1">Hypertrehalosaemic neuropeptide</fullName>
    </alternativeName>
</protein>
<comment type="function">
    <text evidence="5">Hypertrehalosaemic factors are neuropeptides that elevate the level of trehalose in the hemolymph (trehalose is the major carbohydrate in the hemolymph of insects).</text>
</comment>
<comment type="subcellular location">
    <subcellularLocation>
        <location evidence="5">Secreted</location>
    </subcellularLocation>
</comment>
<comment type="similarity">
    <text evidence="2">Belongs to the AKH/HRTH/RPCH family.</text>
</comment>
<sequence>QVNFSPGWGT</sequence>
<accession>P85651</accession>
<name>HTF_GYNLU</name>
<feature type="peptide" id="PRO_0000378652" description="Hypertrehalosaemic factor" evidence="3">
    <location>
        <begin position="1"/>
        <end position="10"/>
    </location>
</feature>
<feature type="modified residue" description="Pyrrolidone carboxylic acid" evidence="3">
    <location>
        <position position="1"/>
    </location>
</feature>
<feature type="modified residue" description="Threonine amide" evidence="3">
    <location>
        <position position="10"/>
    </location>
</feature>
<proteinExistence type="evidence at protein level"/>